<evidence type="ECO:0000250" key="1"/>
<evidence type="ECO:0000256" key="2">
    <source>
        <dbReference type="SAM" id="MobiDB-lite"/>
    </source>
</evidence>
<evidence type="ECO:0000305" key="3"/>
<name>PHR_NEUCR</name>
<sequence>MAPSKRKASAPPQTSHVNGNPSADKKRKTTTDAPPTNPNTSSDPLRAPHPFYKDSETHGIVLRKFYPHEMSNARAQAYNDNELPRPIETLSAALAETAALRKSLPVRQAVVHWFKMDLRLHDNRSLWLASQKAKEAGVPLICLYVLSPEDLEAHLRAPIRVDFMLRTLEVLKTDLEDLGIPLWVETVEKRKEVPTKIKELMKSWGASHLFCAMEYEVDELRREAKLVKLLAEGEKGEKMAADVVHDTCVVMPGALQSGSGGQYAVYSPWFRAWIKHIEENPECLEIYEKPGPNPPGTKEKHENLFACSIPEAPEGKRLRDDEKARYHSLWPAGEHEALKRLEKFCDEAIGKYAERRNIPAMQGTSNLSVHFASGTLSARTAIRTARDRNNTKKLNGGNEGIQRWISEVAWRDFYKHVLVHWPYVCMNKPFKPTYSNIEWSYNVDHFHAWTQGRTGFPIIDAAMRQVLSTGYMHNRLRMIVASFLAKDLLVDWRMGERYFMEHLIDGDFASNNGGWGFAASVGVDPQPYFRVFNPLLQSEKFDPDGDYIRKWVEELRDLPELKGGKGGEIHDPYGRGSEKVKKKLEEKGYPRPIVEHSGARDRALDAYKRGLARDL</sequence>
<gene>
    <name type="primary">phr</name>
    <name type="ORF">NCU08626</name>
</gene>
<protein>
    <recommendedName>
        <fullName>Deoxyribodipyrimidine photo-lyase</fullName>
        <ecNumber>4.1.99.3</ecNumber>
    </recommendedName>
    <alternativeName>
        <fullName>DNA photolyase</fullName>
    </alternativeName>
    <alternativeName>
        <fullName>Photoreactivating enzyme</fullName>
    </alternativeName>
</protein>
<organism>
    <name type="scientific">Neurospora crassa (strain ATCC 24698 / 74-OR23-1A / CBS 708.71 / DSM 1257 / FGSC 987)</name>
    <dbReference type="NCBI Taxonomy" id="367110"/>
    <lineage>
        <taxon>Eukaryota</taxon>
        <taxon>Fungi</taxon>
        <taxon>Dikarya</taxon>
        <taxon>Ascomycota</taxon>
        <taxon>Pezizomycotina</taxon>
        <taxon>Sordariomycetes</taxon>
        <taxon>Sordariomycetidae</taxon>
        <taxon>Sordariales</taxon>
        <taxon>Sordariaceae</taxon>
        <taxon>Neurospora</taxon>
    </lineage>
</organism>
<accession>P27526</accession>
<accession>Q7RVL4</accession>
<comment type="function">
    <text>Involved in repair of UV radiation-induced DNA damage. Catalyzes the light-dependent monomerization (300-600 nm) of cyclobutyl pyrimidine dimers (in cis-syn configuration), which are formed between adjacent bases on the same DNA strand upon exposure to ultraviolet radiation.</text>
</comment>
<comment type="catalytic activity">
    <reaction>
        <text>cyclobutadipyrimidine (in DNA) = 2 pyrimidine residues (in DNA).</text>
        <dbReference type="EC" id="4.1.99.3"/>
    </reaction>
</comment>
<comment type="cofactor">
    <cofactor>
        <name>FAD</name>
        <dbReference type="ChEBI" id="CHEBI:57692"/>
    </cofactor>
    <text>Binds 1 FAD per subunit.</text>
</comment>
<comment type="cofactor">
    <cofactor>
        <name>(6R)-5,10-methylene-5,6,7,8-tetrahydrofolate</name>
        <dbReference type="ChEBI" id="CHEBI:15636"/>
    </cofactor>
    <text>Binds 1 5,10-methenyltetrahydrofolate (MTHF) non-covalently per subunit.</text>
</comment>
<comment type="subunit">
    <text>Monomer.</text>
</comment>
<comment type="similarity">
    <text evidence="3">Belongs to the DNA photolyase class-1 family.</text>
</comment>
<comment type="sequence caution" evidence="3">
    <conflict type="erroneous initiation">
        <sequence resource="EMBL-CDS" id="CAA41549"/>
    </conflict>
    <text>Extended N-terminus.</text>
</comment>
<reference key="1">
    <citation type="journal article" date="1991" name="Nucleic Acids Res.">
        <title>Cloning and functional characterization of a eucaryotic DNA photolyase gene from Neurospora crassa.</title>
        <authorList>
            <person name="Yajima H."/>
            <person name="Inoue H."/>
            <person name="Oikawa A."/>
            <person name="Yasui A."/>
        </authorList>
    </citation>
    <scope>NUCLEOTIDE SEQUENCE [GENOMIC DNA]</scope>
</reference>
<reference key="2">
    <citation type="journal article" date="2003" name="Nature">
        <title>The genome sequence of the filamentous fungus Neurospora crassa.</title>
        <authorList>
            <person name="Galagan J.E."/>
            <person name="Calvo S.E."/>
            <person name="Borkovich K.A."/>
            <person name="Selker E.U."/>
            <person name="Read N.D."/>
            <person name="Jaffe D.B."/>
            <person name="FitzHugh W."/>
            <person name="Ma L.-J."/>
            <person name="Smirnov S."/>
            <person name="Purcell S."/>
            <person name="Rehman B."/>
            <person name="Elkins T."/>
            <person name="Engels R."/>
            <person name="Wang S."/>
            <person name="Nielsen C.B."/>
            <person name="Butler J."/>
            <person name="Endrizzi M."/>
            <person name="Qui D."/>
            <person name="Ianakiev P."/>
            <person name="Bell-Pedersen D."/>
            <person name="Nelson M.A."/>
            <person name="Werner-Washburne M."/>
            <person name="Selitrennikoff C.P."/>
            <person name="Kinsey J.A."/>
            <person name="Braun E.L."/>
            <person name="Zelter A."/>
            <person name="Schulte U."/>
            <person name="Kothe G.O."/>
            <person name="Jedd G."/>
            <person name="Mewes H.-W."/>
            <person name="Staben C."/>
            <person name="Marcotte E."/>
            <person name="Greenberg D."/>
            <person name="Roy A."/>
            <person name="Foley K."/>
            <person name="Naylor J."/>
            <person name="Stange-Thomann N."/>
            <person name="Barrett R."/>
            <person name="Gnerre S."/>
            <person name="Kamal M."/>
            <person name="Kamvysselis M."/>
            <person name="Mauceli E.W."/>
            <person name="Bielke C."/>
            <person name="Rudd S."/>
            <person name="Frishman D."/>
            <person name="Krystofova S."/>
            <person name="Rasmussen C."/>
            <person name="Metzenberg R.L."/>
            <person name="Perkins D.D."/>
            <person name="Kroken S."/>
            <person name="Cogoni C."/>
            <person name="Macino G."/>
            <person name="Catcheside D.E.A."/>
            <person name="Li W."/>
            <person name="Pratt R.J."/>
            <person name="Osmani S.A."/>
            <person name="DeSouza C.P.C."/>
            <person name="Glass N.L."/>
            <person name="Orbach M.J."/>
            <person name="Berglund J.A."/>
            <person name="Voelker R."/>
            <person name="Yarden O."/>
            <person name="Plamann M."/>
            <person name="Seiler S."/>
            <person name="Dunlap J.C."/>
            <person name="Radford A."/>
            <person name="Aramayo R."/>
            <person name="Natvig D.O."/>
            <person name="Alex L.A."/>
            <person name="Mannhaupt G."/>
            <person name="Ebbole D.J."/>
            <person name="Freitag M."/>
            <person name="Paulsen I."/>
            <person name="Sachs M.S."/>
            <person name="Lander E.S."/>
            <person name="Nusbaum C."/>
            <person name="Birren B.W."/>
        </authorList>
    </citation>
    <scope>NUCLEOTIDE SEQUENCE [LARGE SCALE GENOMIC DNA]</scope>
    <source>
        <strain>ATCC 24698 / 74-OR23-1A / CBS 708.71 / DSM 1257 / FGSC 987</strain>
    </source>
</reference>
<feature type="chain" id="PRO_0000085116" description="Deoxyribodipyrimidine photo-lyase">
    <location>
        <begin position="1"/>
        <end position="615"/>
    </location>
</feature>
<feature type="domain" description="Photolyase/cryptochrome alpha/beta">
    <location>
        <begin position="108"/>
        <end position="249"/>
    </location>
</feature>
<feature type="region of interest" description="Disordered" evidence="2">
    <location>
        <begin position="1"/>
        <end position="53"/>
    </location>
</feature>
<feature type="region of interest" description="Interaction with DNA" evidence="1">
    <location>
        <begin position="407"/>
        <end position="414"/>
    </location>
</feature>
<feature type="region of interest" description="Interaction with DNA" evidence="1">
    <location>
        <begin position="474"/>
        <end position="475"/>
    </location>
</feature>
<feature type="compositionally biased region" description="Polar residues" evidence="2">
    <location>
        <begin position="11"/>
        <end position="21"/>
    </location>
</feature>
<feature type="compositionally biased region" description="Low complexity" evidence="2">
    <location>
        <begin position="31"/>
        <end position="40"/>
    </location>
</feature>
<feature type="binding site" evidence="1">
    <location>
        <position position="352"/>
    </location>
    <ligand>
        <name>FAD</name>
        <dbReference type="ChEBI" id="CHEBI:57692"/>
    </ligand>
</feature>
<feature type="binding site" evidence="1">
    <location>
        <position position="356"/>
    </location>
    <ligand>
        <name>DNA</name>
        <dbReference type="ChEBI" id="CHEBI:16991"/>
    </ligand>
</feature>
<feature type="binding site" evidence="1">
    <location>
        <begin position="364"/>
        <end position="368"/>
    </location>
    <ligand>
        <name>FAD</name>
        <dbReference type="ChEBI" id="CHEBI:57692"/>
    </ligand>
</feature>
<feature type="binding site" evidence="1">
    <location>
        <begin position="505"/>
        <end position="507"/>
    </location>
    <ligand>
        <name>FAD</name>
        <dbReference type="ChEBI" id="CHEBI:57692"/>
    </ligand>
</feature>
<feature type="binding site" evidence="1">
    <location>
        <position position="537"/>
    </location>
    <ligand>
        <name>DNA</name>
        <dbReference type="ChEBI" id="CHEBI:16991"/>
    </ligand>
</feature>
<feature type="site" description="Electron transfer via tryptophanyl radical" evidence="1">
    <location>
        <position position="439"/>
    </location>
</feature>
<feature type="site" description="Electron transfer via tryptophanyl radical" evidence="1">
    <location>
        <position position="492"/>
    </location>
</feature>
<feature type="site" description="Electron transfer via tryptophanyl radical" evidence="1">
    <location>
        <position position="515"/>
    </location>
</feature>
<keyword id="KW-0157">Chromophore</keyword>
<keyword id="KW-0227">DNA damage</keyword>
<keyword id="KW-0234">DNA repair</keyword>
<keyword id="KW-0238">DNA-binding</keyword>
<keyword id="KW-0274">FAD</keyword>
<keyword id="KW-0285">Flavoprotein</keyword>
<keyword id="KW-0456">Lyase</keyword>
<keyword id="KW-0547">Nucleotide-binding</keyword>
<keyword id="KW-1185">Reference proteome</keyword>
<proteinExistence type="inferred from homology"/>
<dbReference type="EC" id="4.1.99.3"/>
<dbReference type="EMBL" id="X58713">
    <property type="protein sequence ID" value="CAA41549.1"/>
    <property type="status" value="ALT_INIT"/>
    <property type="molecule type" value="Genomic_DNA"/>
</dbReference>
<dbReference type="EMBL" id="CM002236">
    <property type="protein sequence ID" value="EAA35598.2"/>
    <property type="molecule type" value="Genomic_DNA"/>
</dbReference>
<dbReference type="PIR" id="S18667">
    <property type="entry name" value="S18667"/>
</dbReference>
<dbReference type="RefSeq" id="XP_964834.2">
    <property type="nucleotide sequence ID" value="XM_959741.2"/>
</dbReference>
<dbReference type="SMR" id="P27526"/>
<dbReference type="FunCoup" id="P27526">
    <property type="interactions" value="301"/>
</dbReference>
<dbReference type="STRING" id="367110.P27526"/>
<dbReference type="PaxDb" id="5141-EFNCRP00000008626"/>
<dbReference type="EnsemblFungi" id="EAA35598">
    <property type="protein sequence ID" value="EAA35598"/>
    <property type="gene ID" value="NCU08626"/>
</dbReference>
<dbReference type="GeneID" id="3880994"/>
<dbReference type="KEGG" id="ncr:NCU08626"/>
<dbReference type="VEuPathDB" id="FungiDB:NCU08626"/>
<dbReference type="HOGENOM" id="CLU_010348_2_1_1"/>
<dbReference type="InParanoid" id="P27526"/>
<dbReference type="OrthoDB" id="435881at2759"/>
<dbReference type="Proteomes" id="UP000001805">
    <property type="component" value="Chromosome 1, Linkage Group I"/>
</dbReference>
<dbReference type="GO" id="GO:0005737">
    <property type="term" value="C:cytoplasm"/>
    <property type="evidence" value="ECO:0000318"/>
    <property type="project" value="GO_Central"/>
</dbReference>
<dbReference type="GO" id="GO:0005634">
    <property type="term" value="C:nucleus"/>
    <property type="evidence" value="ECO:0000318"/>
    <property type="project" value="GO_Central"/>
</dbReference>
<dbReference type="GO" id="GO:0003904">
    <property type="term" value="F:deoxyribodipyrimidine photo-lyase activity"/>
    <property type="evidence" value="ECO:0000318"/>
    <property type="project" value="GO_Central"/>
</dbReference>
<dbReference type="GO" id="GO:0003677">
    <property type="term" value="F:DNA binding"/>
    <property type="evidence" value="ECO:0000318"/>
    <property type="project" value="GO_Central"/>
</dbReference>
<dbReference type="GO" id="GO:0071949">
    <property type="term" value="F:FAD binding"/>
    <property type="evidence" value="ECO:0000318"/>
    <property type="project" value="GO_Central"/>
</dbReference>
<dbReference type="GO" id="GO:0032922">
    <property type="term" value="P:circadian regulation of gene expression"/>
    <property type="evidence" value="ECO:0000318"/>
    <property type="project" value="GO_Central"/>
</dbReference>
<dbReference type="GO" id="GO:0006281">
    <property type="term" value="P:DNA repair"/>
    <property type="evidence" value="ECO:0007669"/>
    <property type="project" value="UniProtKB-KW"/>
</dbReference>
<dbReference type="GO" id="GO:0043153">
    <property type="term" value="P:entrainment of circadian clock by photoperiod"/>
    <property type="evidence" value="ECO:0000318"/>
    <property type="project" value="GO_Central"/>
</dbReference>
<dbReference type="FunFam" id="1.10.579.10:FF:000003">
    <property type="entry name" value="Deoxyribodipyrimidine photo-lyase"/>
    <property type="match status" value="1"/>
</dbReference>
<dbReference type="Gene3D" id="1.25.40.80">
    <property type="match status" value="1"/>
</dbReference>
<dbReference type="Gene3D" id="1.10.579.10">
    <property type="entry name" value="DNA Cyclobutane Dipyrimidine Photolyase, subunit A, domain 3"/>
    <property type="match status" value="1"/>
</dbReference>
<dbReference type="Gene3D" id="3.40.50.620">
    <property type="entry name" value="HUPs"/>
    <property type="match status" value="1"/>
</dbReference>
<dbReference type="InterPro" id="IPR036134">
    <property type="entry name" value="Crypto/Photolyase_FAD-like_sf"/>
</dbReference>
<dbReference type="InterPro" id="IPR036155">
    <property type="entry name" value="Crypto/Photolyase_N_sf"/>
</dbReference>
<dbReference type="InterPro" id="IPR005101">
    <property type="entry name" value="Cryptochr/Photolyase_FAD-bd"/>
</dbReference>
<dbReference type="InterPro" id="IPR002081">
    <property type="entry name" value="Cryptochrome/DNA_photolyase_1"/>
</dbReference>
<dbReference type="InterPro" id="IPR018394">
    <property type="entry name" value="DNA_photolyase_1_CS_C"/>
</dbReference>
<dbReference type="InterPro" id="IPR006050">
    <property type="entry name" value="DNA_photolyase_N"/>
</dbReference>
<dbReference type="InterPro" id="IPR014729">
    <property type="entry name" value="Rossmann-like_a/b/a_fold"/>
</dbReference>
<dbReference type="PANTHER" id="PTHR11455">
    <property type="entry name" value="CRYPTOCHROME"/>
    <property type="match status" value="1"/>
</dbReference>
<dbReference type="PANTHER" id="PTHR11455:SF18">
    <property type="entry name" value="SI:CH1073-390K14.1"/>
    <property type="match status" value="1"/>
</dbReference>
<dbReference type="Pfam" id="PF00875">
    <property type="entry name" value="DNA_photolyase"/>
    <property type="match status" value="1"/>
</dbReference>
<dbReference type="Pfam" id="PF03441">
    <property type="entry name" value="FAD_binding_7"/>
    <property type="match status" value="1"/>
</dbReference>
<dbReference type="PRINTS" id="PR00147">
    <property type="entry name" value="DNAPHOTLYASE"/>
</dbReference>
<dbReference type="SUPFAM" id="SSF48173">
    <property type="entry name" value="Cryptochrome/photolyase FAD-binding domain"/>
    <property type="match status" value="1"/>
</dbReference>
<dbReference type="SUPFAM" id="SSF52425">
    <property type="entry name" value="Cryptochrome/photolyase, N-terminal domain"/>
    <property type="match status" value="1"/>
</dbReference>
<dbReference type="PROSITE" id="PS00394">
    <property type="entry name" value="DNA_PHOTOLYASES_1_1"/>
    <property type="match status" value="1"/>
</dbReference>
<dbReference type="PROSITE" id="PS00691">
    <property type="entry name" value="DNA_PHOTOLYASES_1_2"/>
    <property type="match status" value="1"/>
</dbReference>
<dbReference type="PROSITE" id="PS51645">
    <property type="entry name" value="PHR_CRY_ALPHA_BETA"/>
    <property type="match status" value="1"/>
</dbReference>